<dbReference type="EC" id="1.14.-.-" evidence="1"/>
<dbReference type="EMBL" id="CP000409">
    <property type="protein sequence ID" value="ABV73075.1"/>
    <property type="molecule type" value="Genomic_DNA"/>
</dbReference>
<dbReference type="RefSeq" id="WP_012148276.1">
    <property type="nucleotide sequence ID" value="NC_009879.1"/>
</dbReference>
<dbReference type="SMR" id="A8EXJ2"/>
<dbReference type="STRING" id="293613.A1E_00635"/>
<dbReference type="KEGG" id="rcm:A1E_00635"/>
<dbReference type="eggNOG" id="COG1054">
    <property type="taxonomic scope" value="Bacteria"/>
</dbReference>
<dbReference type="HOGENOM" id="CLU_038878_0_1_5"/>
<dbReference type="Proteomes" id="UP000007056">
    <property type="component" value="Chromosome"/>
</dbReference>
<dbReference type="GO" id="GO:0016705">
    <property type="term" value="F:oxidoreductase activity, acting on paired donors, with incorporation or reduction of molecular oxygen"/>
    <property type="evidence" value="ECO:0007669"/>
    <property type="project" value="UniProtKB-UniRule"/>
</dbReference>
<dbReference type="GO" id="GO:0006400">
    <property type="term" value="P:tRNA modification"/>
    <property type="evidence" value="ECO:0007669"/>
    <property type="project" value="UniProtKB-UniRule"/>
</dbReference>
<dbReference type="CDD" id="cd01518">
    <property type="entry name" value="RHOD_YceA"/>
    <property type="match status" value="1"/>
</dbReference>
<dbReference type="Gene3D" id="3.30.70.100">
    <property type="match status" value="1"/>
</dbReference>
<dbReference type="Gene3D" id="3.40.250.10">
    <property type="entry name" value="Rhodanese-like domain"/>
    <property type="match status" value="1"/>
</dbReference>
<dbReference type="HAMAP" id="MF_00469">
    <property type="entry name" value="TrhO"/>
    <property type="match status" value="1"/>
</dbReference>
<dbReference type="InterPro" id="IPR001763">
    <property type="entry name" value="Rhodanese-like_dom"/>
</dbReference>
<dbReference type="InterPro" id="IPR036873">
    <property type="entry name" value="Rhodanese-like_dom_sf"/>
</dbReference>
<dbReference type="InterPro" id="IPR020936">
    <property type="entry name" value="TrhO"/>
</dbReference>
<dbReference type="InterPro" id="IPR040503">
    <property type="entry name" value="TRHO_N"/>
</dbReference>
<dbReference type="NCBIfam" id="NF002397">
    <property type="entry name" value="PRK01415.1"/>
    <property type="match status" value="1"/>
</dbReference>
<dbReference type="PANTHER" id="PTHR43268:SF3">
    <property type="entry name" value="RHODANESE-LIKE DOMAIN-CONTAINING PROTEIN 7-RELATED"/>
    <property type="match status" value="1"/>
</dbReference>
<dbReference type="PANTHER" id="PTHR43268">
    <property type="entry name" value="THIOSULFATE SULFURTRANSFERASE/RHODANESE-LIKE DOMAIN-CONTAINING PROTEIN 2"/>
    <property type="match status" value="1"/>
</dbReference>
<dbReference type="Pfam" id="PF00581">
    <property type="entry name" value="Rhodanese"/>
    <property type="match status" value="1"/>
</dbReference>
<dbReference type="Pfam" id="PF17773">
    <property type="entry name" value="UPF0176_N"/>
    <property type="match status" value="1"/>
</dbReference>
<dbReference type="SMART" id="SM00450">
    <property type="entry name" value="RHOD"/>
    <property type="match status" value="1"/>
</dbReference>
<dbReference type="SUPFAM" id="SSF52821">
    <property type="entry name" value="Rhodanese/Cell cycle control phosphatase"/>
    <property type="match status" value="1"/>
</dbReference>
<dbReference type="PROSITE" id="PS50206">
    <property type="entry name" value="RHODANESE_3"/>
    <property type="match status" value="1"/>
</dbReference>
<evidence type="ECO:0000255" key="1">
    <source>
        <dbReference type="HAMAP-Rule" id="MF_00469"/>
    </source>
</evidence>
<proteinExistence type="inferred from homology"/>
<comment type="function">
    <text evidence="1">Catalyzes oxygen-dependent 5-hydroxyuridine (ho5U) modification at position 34 in tRNAs.</text>
</comment>
<comment type="catalytic activity">
    <reaction evidence="1">
        <text>uridine(34) in tRNA + AH2 + O2 = 5-hydroxyuridine(34) in tRNA + A + H2O</text>
        <dbReference type="Rhea" id="RHEA:64224"/>
        <dbReference type="Rhea" id="RHEA-COMP:11727"/>
        <dbReference type="Rhea" id="RHEA-COMP:13381"/>
        <dbReference type="ChEBI" id="CHEBI:13193"/>
        <dbReference type="ChEBI" id="CHEBI:15377"/>
        <dbReference type="ChEBI" id="CHEBI:15379"/>
        <dbReference type="ChEBI" id="CHEBI:17499"/>
        <dbReference type="ChEBI" id="CHEBI:65315"/>
        <dbReference type="ChEBI" id="CHEBI:136877"/>
    </reaction>
</comment>
<comment type="similarity">
    <text evidence="1">Belongs to the TrhO family.</text>
</comment>
<gene>
    <name evidence="1" type="primary">trhO</name>
    <name type="ordered locus">A1E_00635</name>
</gene>
<organism>
    <name type="scientific">Rickettsia canadensis (strain McKiel)</name>
    <dbReference type="NCBI Taxonomy" id="293613"/>
    <lineage>
        <taxon>Bacteria</taxon>
        <taxon>Pseudomonadati</taxon>
        <taxon>Pseudomonadota</taxon>
        <taxon>Alphaproteobacteria</taxon>
        <taxon>Rickettsiales</taxon>
        <taxon>Rickettsiaceae</taxon>
        <taxon>Rickettsieae</taxon>
        <taxon>Rickettsia</taxon>
        <taxon>belli group</taxon>
    </lineage>
</organism>
<protein>
    <recommendedName>
        <fullName evidence="1">tRNA uridine(34) hydroxylase</fullName>
        <ecNumber evidence="1">1.14.-.-</ecNumber>
    </recommendedName>
    <alternativeName>
        <fullName evidence="1">tRNA hydroxylation protein O</fullName>
    </alternativeName>
</protein>
<accession>A8EXJ2</accession>
<keyword id="KW-0560">Oxidoreductase</keyword>
<keyword id="KW-0819">tRNA processing</keyword>
<name>TRHO_RICCK</name>
<feature type="chain" id="PRO_1000013766" description="tRNA uridine(34) hydroxylase">
    <location>
        <begin position="1"/>
        <end position="249"/>
    </location>
</feature>
<feature type="domain" description="Rhodanese" evidence="1">
    <location>
        <begin position="124"/>
        <end position="218"/>
    </location>
</feature>
<feature type="active site" description="Cysteine persulfide intermediate" evidence="1">
    <location>
        <position position="178"/>
    </location>
</feature>
<sequence length="249" mass="28639">MNEKIAILSTYSFVNIEEPANLIPKLLLIAKRKYVRGTILLSKEGFNGSFSGSYENVNLVLEELIKLTVPKDVNVKINYSDLHPFQKLKVRLKKEIVAMNVDDLNVDLFKGEYIESKDWDSFITKQDVIVIDTRNDYEVEIGTFKSAINPYTKTFKQFPAWVHQNEKLLKGKKIAMFCTGGIRCEKSTSLLKSIGYDDVYHLKGGILQYLEDTQNKNNLWQGECFVFDDRRAVEDDLSPSERHTRLPST</sequence>
<reference key="1">
    <citation type="submission" date="2007-09" db="EMBL/GenBank/DDBJ databases">
        <title>Complete genome sequence of Rickettsia canadensis.</title>
        <authorList>
            <person name="Madan A."/>
            <person name="Fahey J."/>
            <person name="Helton E."/>
            <person name="Ketteman M."/>
            <person name="Madan A."/>
            <person name="Rodrigues S."/>
            <person name="Sanchez A."/>
            <person name="Whiting M."/>
            <person name="Dasch G."/>
            <person name="Eremeeva M."/>
        </authorList>
    </citation>
    <scope>NUCLEOTIDE SEQUENCE [LARGE SCALE GENOMIC DNA]</scope>
    <source>
        <strain>McKiel</strain>
    </source>
</reference>